<gene>
    <name evidence="1" type="primary">nadA</name>
    <name type="ordered locus">Sca_1404</name>
</gene>
<comment type="function">
    <text evidence="1">Catalyzes the condensation of iminoaspartate with dihydroxyacetone phosphate to form quinolinate.</text>
</comment>
<comment type="catalytic activity">
    <reaction evidence="1">
        <text>iminosuccinate + dihydroxyacetone phosphate = quinolinate + phosphate + 2 H2O + H(+)</text>
        <dbReference type="Rhea" id="RHEA:25888"/>
        <dbReference type="ChEBI" id="CHEBI:15377"/>
        <dbReference type="ChEBI" id="CHEBI:15378"/>
        <dbReference type="ChEBI" id="CHEBI:29959"/>
        <dbReference type="ChEBI" id="CHEBI:43474"/>
        <dbReference type="ChEBI" id="CHEBI:57642"/>
        <dbReference type="ChEBI" id="CHEBI:77875"/>
        <dbReference type="EC" id="2.5.1.72"/>
    </reaction>
    <physiologicalReaction direction="left-to-right" evidence="1">
        <dbReference type="Rhea" id="RHEA:25889"/>
    </physiologicalReaction>
</comment>
<comment type="cofactor">
    <cofactor evidence="1">
        <name>[4Fe-4S] cluster</name>
        <dbReference type="ChEBI" id="CHEBI:49883"/>
    </cofactor>
    <text evidence="1">Binds 1 [4Fe-4S] cluster per subunit.</text>
</comment>
<comment type="pathway">
    <text evidence="1">Cofactor biosynthesis; NAD(+) biosynthesis; quinolinate from iminoaspartate: step 1/1.</text>
</comment>
<comment type="subcellular location">
    <subcellularLocation>
        <location evidence="1">Cytoplasm</location>
    </subcellularLocation>
</comment>
<comment type="similarity">
    <text evidence="1">Belongs to the quinolinate synthase family. Type 3 subfamily.</text>
</comment>
<sequence>MFNPILSVSKSIPEKYLQMSQEELENHIQAIKDQLGNRLFMPTHHYQKNEVVQFADITGDSLELARICKENTEAEYFVFNGVHFMAETADILTDDSQDIYLPDLSAGCSMADMANITQALHGYDVLTEKFHLDILPLTYVNSTAAIKKFVGEHGGSCVTSGNAKSVVDWALNQGKVILFLPDQHLGRNTAYDLGIPLEQMAVWDPIAKELIYEGDLEDLRIVLWKGHCSVHEKFHKAHIDMARERDPEINVIVHPECEFEVVQAADYAGSTRYIIETIKNAPKGSRWLIGTEMNLVNRLKETYTDITIDSLNPLMCSCLTMNRIDLPHLAWCLDKILDGNKDNIIKVDAETAKYAKESLDRMLSIT</sequence>
<reference key="1">
    <citation type="journal article" date="2009" name="Appl. Environ. Microbiol.">
        <title>Genome analysis of the meat starter culture bacterium Staphylococcus carnosus TM300.</title>
        <authorList>
            <person name="Rosenstein R."/>
            <person name="Nerz C."/>
            <person name="Biswas L."/>
            <person name="Resch A."/>
            <person name="Raddatz G."/>
            <person name="Schuster S.C."/>
            <person name="Goetz F."/>
        </authorList>
    </citation>
    <scope>NUCLEOTIDE SEQUENCE [LARGE SCALE GENOMIC DNA]</scope>
    <source>
        <strain>TM300</strain>
    </source>
</reference>
<dbReference type="EC" id="2.5.1.72" evidence="1"/>
<dbReference type="EMBL" id="AM295250">
    <property type="protein sequence ID" value="CAL28309.1"/>
    <property type="molecule type" value="Genomic_DNA"/>
</dbReference>
<dbReference type="RefSeq" id="WP_015900649.1">
    <property type="nucleotide sequence ID" value="NC_012121.1"/>
</dbReference>
<dbReference type="SMR" id="B9DMZ6"/>
<dbReference type="GeneID" id="93793829"/>
<dbReference type="KEGG" id="sca:SCA_1404"/>
<dbReference type="eggNOG" id="COG0379">
    <property type="taxonomic scope" value="Bacteria"/>
</dbReference>
<dbReference type="HOGENOM" id="CLU_047382_2_0_9"/>
<dbReference type="OrthoDB" id="9801204at2"/>
<dbReference type="BioCyc" id="SCAR396513:SCA_RS07015-MONOMER"/>
<dbReference type="UniPathway" id="UPA00253">
    <property type="reaction ID" value="UER00327"/>
</dbReference>
<dbReference type="Proteomes" id="UP000000444">
    <property type="component" value="Chromosome"/>
</dbReference>
<dbReference type="GO" id="GO:0005829">
    <property type="term" value="C:cytosol"/>
    <property type="evidence" value="ECO:0007669"/>
    <property type="project" value="TreeGrafter"/>
</dbReference>
<dbReference type="GO" id="GO:0051539">
    <property type="term" value="F:4 iron, 4 sulfur cluster binding"/>
    <property type="evidence" value="ECO:0007669"/>
    <property type="project" value="UniProtKB-KW"/>
</dbReference>
<dbReference type="GO" id="GO:0046872">
    <property type="term" value="F:metal ion binding"/>
    <property type="evidence" value="ECO:0007669"/>
    <property type="project" value="UniProtKB-KW"/>
</dbReference>
<dbReference type="GO" id="GO:0008987">
    <property type="term" value="F:quinolinate synthetase A activity"/>
    <property type="evidence" value="ECO:0007669"/>
    <property type="project" value="UniProtKB-UniRule"/>
</dbReference>
<dbReference type="GO" id="GO:0034628">
    <property type="term" value="P:'de novo' NAD biosynthetic process from L-aspartate"/>
    <property type="evidence" value="ECO:0007669"/>
    <property type="project" value="TreeGrafter"/>
</dbReference>
<dbReference type="FunFam" id="3.40.50.10800:FF:000001">
    <property type="entry name" value="Quinolinate synthase A"/>
    <property type="match status" value="1"/>
</dbReference>
<dbReference type="Gene3D" id="3.40.50.10800">
    <property type="entry name" value="NadA-like"/>
    <property type="match status" value="3"/>
</dbReference>
<dbReference type="HAMAP" id="MF_00569">
    <property type="entry name" value="NadA_type3"/>
    <property type="match status" value="1"/>
</dbReference>
<dbReference type="InterPro" id="IPR003473">
    <property type="entry name" value="NadA"/>
</dbReference>
<dbReference type="InterPro" id="IPR036094">
    <property type="entry name" value="NadA_sf"/>
</dbReference>
<dbReference type="InterPro" id="IPR023515">
    <property type="entry name" value="Quinolinate_synth_A_type3"/>
</dbReference>
<dbReference type="NCBIfam" id="TIGR00550">
    <property type="entry name" value="nadA"/>
    <property type="match status" value="1"/>
</dbReference>
<dbReference type="NCBIfam" id="NF006880">
    <property type="entry name" value="PRK09375.2-1"/>
    <property type="match status" value="1"/>
</dbReference>
<dbReference type="NCBIfam" id="NF006883">
    <property type="entry name" value="PRK09375.2-4"/>
    <property type="match status" value="1"/>
</dbReference>
<dbReference type="PANTHER" id="PTHR30573:SF0">
    <property type="entry name" value="QUINOLINATE SYNTHASE, CHLOROPLASTIC"/>
    <property type="match status" value="1"/>
</dbReference>
<dbReference type="PANTHER" id="PTHR30573">
    <property type="entry name" value="QUINOLINATE SYNTHETASE A"/>
    <property type="match status" value="1"/>
</dbReference>
<dbReference type="Pfam" id="PF02445">
    <property type="entry name" value="NadA"/>
    <property type="match status" value="1"/>
</dbReference>
<dbReference type="SUPFAM" id="SSF142754">
    <property type="entry name" value="NadA-like"/>
    <property type="match status" value="1"/>
</dbReference>
<protein>
    <recommendedName>
        <fullName evidence="1">Quinolinate synthase</fullName>
        <ecNumber evidence="1">2.5.1.72</ecNumber>
    </recommendedName>
</protein>
<name>NADA_STACT</name>
<organism>
    <name type="scientific">Staphylococcus carnosus (strain TM300)</name>
    <dbReference type="NCBI Taxonomy" id="396513"/>
    <lineage>
        <taxon>Bacteria</taxon>
        <taxon>Bacillati</taxon>
        <taxon>Bacillota</taxon>
        <taxon>Bacilli</taxon>
        <taxon>Bacillales</taxon>
        <taxon>Staphylococcaceae</taxon>
        <taxon>Staphylococcus</taxon>
    </lineage>
</organism>
<evidence type="ECO:0000255" key="1">
    <source>
        <dbReference type="HAMAP-Rule" id="MF_00569"/>
    </source>
</evidence>
<keyword id="KW-0004">4Fe-4S</keyword>
<keyword id="KW-0963">Cytoplasm</keyword>
<keyword id="KW-0408">Iron</keyword>
<keyword id="KW-0411">Iron-sulfur</keyword>
<keyword id="KW-0479">Metal-binding</keyword>
<keyword id="KW-0662">Pyridine nucleotide biosynthesis</keyword>
<keyword id="KW-1185">Reference proteome</keyword>
<keyword id="KW-0808">Transferase</keyword>
<proteinExistence type="inferred from homology"/>
<feature type="chain" id="PRO_1000146825" description="Quinolinate synthase">
    <location>
        <begin position="1"/>
        <end position="366"/>
    </location>
</feature>
<feature type="binding site" evidence="1">
    <location>
        <position position="44"/>
    </location>
    <ligand>
        <name>iminosuccinate</name>
        <dbReference type="ChEBI" id="CHEBI:77875"/>
    </ligand>
</feature>
<feature type="binding site" evidence="1">
    <location>
        <position position="61"/>
    </location>
    <ligand>
        <name>iminosuccinate</name>
        <dbReference type="ChEBI" id="CHEBI:77875"/>
    </ligand>
</feature>
<feature type="binding site" evidence="1">
    <location>
        <position position="108"/>
    </location>
    <ligand>
        <name>[4Fe-4S] cluster</name>
        <dbReference type="ChEBI" id="CHEBI:49883"/>
    </ligand>
</feature>
<feature type="binding site" evidence="1">
    <location>
        <begin position="139"/>
        <end position="141"/>
    </location>
    <ligand>
        <name>iminosuccinate</name>
        <dbReference type="ChEBI" id="CHEBI:77875"/>
    </ligand>
</feature>
<feature type="binding site" evidence="1">
    <location>
        <position position="160"/>
    </location>
    <ligand>
        <name>iminosuccinate</name>
        <dbReference type="ChEBI" id="CHEBI:77875"/>
    </ligand>
</feature>
<feature type="binding site" evidence="1">
    <location>
        <position position="228"/>
    </location>
    <ligand>
        <name>[4Fe-4S] cluster</name>
        <dbReference type="ChEBI" id="CHEBI:49883"/>
    </ligand>
</feature>
<feature type="binding site" evidence="1">
    <location>
        <begin position="254"/>
        <end position="256"/>
    </location>
    <ligand>
        <name>iminosuccinate</name>
        <dbReference type="ChEBI" id="CHEBI:77875"/>
    </ligand>
</feature>
<feature type="binding site" evidence="1">
    <location>
        <position position="271"/>
    </location>
    <ligand>
        <name>iminosuccinate</name>
        <dbReference type="ChEBI" id="CHEBI:77875"/>
    </ligand>
</feature>
<feature type="binding site" evidence="1">
    <location>
        <position position="318"/>
    </location>
    <ligand>
        <name>[4Fe-4S] cluster</name>
        <dbReference type="ChEBI" id="CHEBI:49883"/>
    </ligand>
</feature>
<accession>B9DMZ6</accession>